<comment type="function">
    <text evidence="6">Mitochondrial 10-formyltetrahydrofolate dehydrogenase that catalyzes the NADP(+)-dependent conversion of 10-formyltetrahydrofolate to tetrahydrofolate and carbon dioxide.</text>
</comment>
<comment type="catalytic activity">
    <reaction evidence="6">
        <text>(6R)-10-formyltetrahydrofolate + NADP(+) + H2O = (6S)-5,6,7,8-tetrahydrofolate + CO2 + NADPH + H(+)</text>
        <dbReference type="Rhea" id="RHEA:10180"/>
        <dbReference type="ChEBI" id="CHEBI:15377"/>
        <dbReference type="ChEBI" id="CHEBI:15378"/>
        <dbReference type="ChEBI" id="CHEBI:16526"/>
        <dbReference type="ChEBI" id="CHEBI:57453"/>
        <dbReference type="ChEBI" id="CHEBI:57783"/>
        <dbReference type="ChEBI" id="CHEBI:58349"/>
        <dbReference type="ChEBI" id="CHEBI:195366"/>
        <dbReference type="EC" id="1.5.1.6"/>
    </reaction>
    <physiologicalReaction direction="left-to-right" evidence="6">
        <dbReference type="Rhea" id="RHEA:10181"/>
    </physiologicalReaction>
</comment>
<comment type="subcellular location">
    <subcellularLocation>
        <location evidence="9">Mitochondrion</location>
    </subcellularLocation>
</comment>
<comment type="domain">
    <text evidence="2">The N-terminal hydrolase domain has an NADP-independent formyltetrahydrofolate hydrolase activity, releasing formate and tetrahydrofolate.</text>
</comment>
<comment type="domain">
    <text evidence="2">The C-terminal aldehyde dehydrogenase domain has an NADP-dependent dehydrogenase activity. It catalyzes the oxidation of formate, released by the hydrolysis of formyltetrahydrofolate, into CO2.</text>
</comment>
<comment type="domain">
    <text evidence="3">The carrier domain is phosphopantetheinylated and uses the 4'-phosphopantetheine/4'-PP swinging arm to transfer the formyl group released by the N-terminal formyltetrahydrofolate hydrolase activity to the C-terminal aldehyde dehydrogenase domain that catalyzes its NADP-dependent oxidation into CO2. The overall NADP-dependent physiological reaction requires the 3 domains (N-terminal hydrolase, C-terminal aldehyde dehydrogenase and carrier domains) to convert formyltetrahydrofolate into tetrahydrofolate and CO2.</text>
</comment>
<comment type="PTM">
    <text evidence="3">Phosphopantetheinylation at Ser-375 by AASDHPPT is required for the formyltetrahydrofolate dehydrogenase activity.</text>
</comment>
<comment type="disruption phenotype">
    <text evidence="6">Homozygous knockout mice lacking Aldh1l2 are viable and fertile and no embryonic lethality is observed (PubMed:33168096). They do not display phenotypic differences in terms of growth, food consumption and development (PubMed:33168096). 10-formyl-THF and dihydrofolate accumulate in the liver of the knockout mice. It is associated with a decrease in levels of NADPH and ATP specifically in the mitochondrion (PubMed:33168096). Male knockout mice accumulate more fats in the liver which is associated with impaired beta-oxidation of fatty acids (PubMed:33168096).</text>
</comment>
<comment type="similarity">
    <text evidence="8">In the N-terminal section; belongs to the GART family.</text>
</comment>
<comment type="similarity">
    <text evidence="8">In the C-terminal section; belongs to the aldehyde dehydrogenase family. ALDH1L subfamily.</text>
</comment>
<feature type="chain" id="PRO_0000316002" description="Mitochondrial 10-formyltetrahydrofolate dehydrogenase">
    <location>
        <begin position="1"/>
        <end position="923"/>
    </location>
</feature>
<feature type="transit peptide" description="Mitochondrion; not cleaved" evidence="3">
    <location>
        <begin position="1"/>
        <end position="19"/>
    </location>
</feature>
<feature type="domain" description="Carrier" evidence="5">
    <location>
        <begin position="339"/>
        <end position="416"/>
    </location>
</feature>
<feature type="region of interest" description="Hydrolase domain" evidence="2">
    <location>
        <begin position="23"/>
        <end position="331"/>
    </location>
</feature>
<feature type="region of interest" description="Aldehyde dehydrogenase domain" evidence="2">
    <location>
        <begin position="438"/>
        <end position="923"/>
    </location>
</feature>
<feature type="active site" description="Proton donor" evidence="2">
    <location>
        <position position="128"/>
    </location>
</feature>
<feature type="active site" description="Proton acceptor" evidence="2">
    <location>
        <position position="694"/>
    </location>
</feature>
<feature type="active site" description="Proton donor" evidence="2">
    <location>
        <position position="728"/>
    </location>
</feature>
<feature type="binding site" evidence="1">
    <location>
        <begin position="110"/>
        <end position="112"/>
    </location>
    <ligand>
        <name>(6R)-10-formyltetrahydrofolate</name>
        <dbReference type="ChEBI" id="CHEBI:195366"/>
    </ligand>
</feature>
<feature type="binding site" evidence="1">
    <location>
        <position position="164"/>
    </location>
    <ligand>
        <name>(6R)-10-formyltetrahydrofolate</name>
        <dbReference type="ChEBI" id="CHEBI:195366"/>
    </ligand>
</feature>
<feature type="binding site" evidence="2">
    <location>
        <begin position="592"/>
        <end position="594"/>
    </location>
    <ligand>
        <name>NADP(+)</name>
        <dbReference type="ChEBI" id="CHEBI:58349"/>
    </ligand>
</feature>
<feature type="binding site" evidence="2">
    <location>
        <begin position="618"/>
        <end position="621"/>
    </location>
    <ligand>
        <name>NADP(+)</name>
        <dbReference type="ChEBI" id="CHEBI:58349"/>
    </ligand>
</feature>
<feature type="binding site" evidence="2">
    <location>
        <begin position="651"/>
        <end position="656"/>
    </location>
    <ligand>
        <name>NADP(+)</name>
        <dbReference type="ChEBI" id="CHEBI:58349"/>
    </ligand>
</feature>
<feature type="binding site" evidence="2">
    <location>
        <begin position="671"/>
        <end position="672"/>
    </location>
    <ligand>
        <name>NADP(+)</name>
        <dbReference type="ChEBI" id="CHEBI:58349"/>
    </ligand>
</feature>
<feature type="binding site" evidence="2">
    <location>
        <begin position="694"/>
        <end position="695"/>
    </location>
    <ligand>
        <name>NADP(+)</name>
        <dbReference type="ChEBI" id="CHEBI:58349"/>
    </ligand>
</feature>
<feature type="binding site" evidence="2">
    <location>
        <position position="778"/>
    </location>
    <ligand>
        <name>NADP(+)</name>
        <dbReference type="ChEBI" id="CHEBI:58349"/>
    </ligand>
</feature>
<feature type="binding site" evidence="2">
    <location>
        <begin position="825"/>
        <end position="827"/>
    </location>
    <ligand>
        <name>NADP(+)</name>
        <dbReference type="ChEBI" id="CHEBI:58349"/>
    </ligand>
</feature>
<feature type="site" description="Essential for catalytic activity" evidence="2">
    <location>
        <position position="164"/>
    </location>
</feature>
<feature type="modified residue" description="Phosphoserine" evidence="1">
    <location>
        <position position="31"/>
    </location>
</feature>
<feature type="modified residue" description="N6-succinyllysine" evidence="4">
    <location>
        <position position="60"/>
    </location>
</feature>
<feature type="modified residue" description="O-(pantetheine 4'-phosphoryl)serine" evidence="3 5">
    <location>
        <position position="375"/>
    </location>
</feature>
<feature type="modified residue" description="Phosphoserine" evidence="1">
    <location>
        <position position="650"/>
    </location>
</feature>
<feature type="modified residue" description="N6-succinyllysine" evidence="11">
    <location>
        <position position="681"/>
    </location>
</feature>
<feature type="modified residue" description="N6-acetyllysine" evidence="3">
    <location>
        <position position="903"/>
    </location>
</feature>
<feature type="sequence conflict" description="In Ref. 2; AAH34531." evidence="8" ref="2">
    <original>Y</original>
    <variation>H</variation>
    <location>
        <position position="476"/>
    </location>
</feature>
<reference key="1">
    <citation type="journal article" date="2009" name="PLoS Biol.">
        <title>Lineage-specific biology revealed by a finished genome assembly of the mouse.</title>
        <authorList>
            <person name="Church D.M."/>
            <person name="Goodstadt L."/>
            <person name="Hillier L.W."/>
            <person name="Zody M.C."/>
            <person name="Goldstein S."/>
            <person name="She X."/>
            <person name="Bult C.J."/>
            <person name="Agarwala R."/>
            <person name="Cherry J.L."/>
            <person name="DiCuccio M."/>
            <person name="Hlavina W."/>
            <person name="Kapustin Y."/>
            <person name="Meric P."/>
            <person name="Maglott D."/>
            <person name="Birtle Z."/>
            <person name="Marques A.C."/>
            <person name="Graves T."/>
            <person name="Zhou S."/>
            <person name="Teague B."/>
            <person name="Potamousis K."/>
            <person name="Churas C."/>
            <person name="Place M."/>
            <person name="Herschleb J."/>
            <person name="Runnheim R."/>
            <person name="Forrest D."/>
            <person name="Amos-Landgraf J."/>
            <person name="Schwartz D.C."/>
            <person name="Cheng Z."/>
            <person name="Lindblad-Toh K."/>
            <person name="Eichler E.E."/>
            <person name="Ponting C.P."/>
        </authorList>
    </citation>
    <scope>NUCLEOTIDE SEQUENCE [LARGE SCALE GENOMIC DNA]</scope>
    <source>
        <strain>C57BL/6J</strain>
    </source>
</reference>
<reference key="2">
    <citation type="journal article" date="2004" name="Genome Res.">
        <title>The status, quality, and expansion of the NIH full-length cDNA project: the Mammalian Gene Collection (MGC).</title>
        <authorList>
            <consortium name="The MGC Project Team"/>
        </authorList>
    </citation>
    <scope>NUCLEOTIDE SEQUENCE [LARGE SCALE MRNA]</scope>
    <source>
        <strain>FVB/N</strain>
        <tissue>Salivary gland</tissue>
    </source>
</reference>
<reference key="3">
    <citation type="journal article" date="2010" name="Cell">
        <title>A tissue-specific atlas of mouse protein phosphorylation and expression.</title>
        <authorList>
            <person name="Huttlin E.L."/>
            <person name="Jedrychowski M.P."/>
            <person name="Elias J.E."/>
            <person name="Goswami T."/>
            <person name="Rad R."/>
            <person name="Beausoleil S.A."/>
            <person name="Villen J."/>
            <person name="Haas W."/>
            <person name="Sowa M.E."/>
            <person name="Gygi S.P."/>
        </authorList>
    </citation>
    <scope>IDENTIFICATION BY MASS SPECTROMETRY [LARGE SCALE ANALYSIS]</scope>
    <source>
        <tissue>Brain</tissue>
        <tissue>Brown adipose tissue</tissue>
        <tissue>Heart</tissue>
        <tissue>Pancreas</tissue>
        <tissue>Spleen</tissue>
    </source>
</reference>
<reference key="4">
    <citation type="journal article" date="2013" name="Mol. Cell">
        <title>SIRT5-mediated lysine desuccinylation impacts diverse metabolic pathways.</title>
        <authorList>
            <person name="Park J."/>
            <person name="Chen Y."/>
            <person name="Tishkoff D.X."/>
            <person name="Peng C."/>
            <person name="Tan M."/>
            <person name="Dai L."/>
            <person name="Xie Z."/>
            <person name="Zhang Y."/>
            <person name="Zwaans B.M."/>
            <person name="Skinner M.E."/>
            <person name="Lombard D.B."/>
            <person name="Zhao Y."/>
        </authorList>
    </citation>
    <scope>SUCCINYLATION [LARGE SCALE ANALYSIS] AT LYS-681</scope>
    <scope>IDENTIFICATION BY MASS SPECTROMETRY [LARGE SCALE ANALYSIS]</scope>
    <source>
        <tissue>Embryonic fibroblast</tissue>
    </source>
</reference>
<reference key="5">
    <citation type="journal article" date="2020" name="Hum. Genomics">
        <title>Aldh1l2 knockout mouse metabolomics links the loss of the mitochondrial folate enzyme to deregulation of a lipid metabolism observed in rare human disorder.</title>
        <authorList>
            <person name="Krupenko N.I."/>
            <person name="Sharma J."/>
            <person name="Pediaditakis P."/>
            <person name="Helke K.L."/>
            <person name="Hall M.S."/>
            <person name="Du X."/>
            <person name="Sumner S."/>
            <person name="Krupenko S.A."/>
        </authorList>
    </citation>
    <scope>FUNCTION</scope>
    <scope>CATALYTIC ACTIVITY</scope>
    <scope>SUBCELLULAR LOCATION</scope>
    <scope>DISRUPTION PHENOTYPE</scope>
</reference>
<organism>
    <name type="scientific">Mus musculus</name>
    <name type="common">Mouse</name>
    <dbReference type="NCBI Taxonomy" id="10090"/>
    <lineage>
        <taxon>Eukaryota</taxon>
        <taxon>Metazoa</taxon>
        <taxon>Chordata</taxon>
        <taxon>Craniata</taxon>
        <taxon>Vertebrata</taxon>
        <taxon>Euteleostomi</taxon>
        <taxon>Mammalia</taxon>
        <taxon>Eutheria</taxon>
        <taxon>Euarchontoglires</taxon>
        <taxon>Glires</taxon>
        <taxon>Rodentia</taxon>
        <taxon>Myomorpha</taxon>
        <taxon>Muroidea</taxon>
        <taxon>Muridae</taxon>
        <taxon>Murinae</taxon>
        <taxon>Mus</taxon>
        <taxon>Mus</taxon>
    </lineage>
</organism>
<name>AL1L2_MOUSE</name>
<sequence>MLWRGSQALRHFSTSRVYFKNKLKLALIGQSLFGQEVYSQLLKEGHRVVGVFTVPDKDGKADPLALAAEKDGTPVFKFPRWRLKGKTIKEVAEAYQSVGAELNVLPFCTQFIPMDVIDSPKHGSIIYHPSLLPRHRGASAINWTLIMGDKKAGFSVFWADDGLDTGPILLQRSCDVKPNDTVDSLYNRFLFPEGIKAMVEAVQLIADGKAPRTPQPEEGATYEGIQKKENAEVSWDQPAEGLHNWIRGHDKVPGAWAEINGQMVTFYGSSLLTSSVPSGEPLDIRGAKKPGLVTKNGLVLFGNDGKALMVRNLQFEDGKMIPASQYFSAGETSVVELTAEELKVAETIKVIWARILSNTPVIEDSTDFFKSGASSMDVVRLVEEIRQSCGGLQLQNEDVYMATKFGDFIQKVVRRLRGEDEEAEMVVDYVSKEVNGMTVKIPYQCFINGQFVDAEDGETYATVNPTDGTTICRVSYASLADVDRAVAAAKDAFENGEWGRMNARDRGRLMYRLADLMEENQEELATIEALDSGAVYTLALKTHIGMSVQTFRYFAGWCDKIQGSTIPINQARPNYNLTFTKKEPLGACAIIIPWNYPLMMLAWKSAACLAAGNTLVLKPAQVTPLTALKFAELTVKAGFPKGVINIIPGSGGVAGQRLSQHPDIRKLGFTGSTSVGKQIMKSCAVSNLKKVSLELGGKSPLIIFSDCDLEKAVRMGMGAVFFNKGENCIAAGRLFVEEAIHDEFVTRVVEEIKKMKIGDPLDRSTDHGPQNHRAHLEKLLQYCETGVQEGATLVYGGRQVQRPGFFMEPTVFTGVEDHMYLAKEESFGPIMVISKFQNGDIDGVLQRANNTEYGLASGVFTRDINKAMYVSDKLEAGTVFINTYNKTDVAAPFGGMKQSGFGKDLGEEALNEYLKIKTVTLEY</sequence>
<evidence type="ECO:0000250" key="1">
    <source>
        <dbReference type="UniProtKB" id="O75891"/>
    </source>
</evidence>
<evidence type="ECO:0000250" key="2">
    <source>
        <dbReference type="UniProtKB" id="P28037"/>
    </source>
</evidence>
<evidence type="ECO:0000250" key="3">
    <source>
        <dbReference type="UniProtKB" id="Q3SY69"/>
    </source>
</evidence>
<evidence type="ECO:0000250" key="4">
    <source>
        <dbReference type="UniProtKB" id="Q8R0Y6"/>
    </source>
</evidence>
<evidence type="ECO:0000255" key="5">
    <source>
        <dbReference type="PROSITE-ProRule" id="PRU00258"/>
    </source>
</evidence>
<evidence type="ECO:0000269" key="6">
    <source>
    </source>
</evidence>
<evidence type="ECO:0000303" key="7">
    <source>
    </source>
</evidence>
<evidence type="ECO:0000305" key="8"/>
<evidence type="ECO:0000305" key="9">
    <source>
    </source>
</evidence>
<evidence type="ECO:0000312" key="10">
    <source>
        <dbReference type="MGI" id="MGI:2444680"/>
    </source>
</evidence>
<evidence type="ECO:0007744" key="11">
    <source>
    </source>
</evidence>
<keyword id="KW-0007">Acetylation</keyword>
<keyword id="KW-0496">Mitochondrion</keyword>
<keyword id="KW-0521">NADP</keyword>
<keyword id="KW-0554">One-carbon metabolism</keyword>
<keyword id="KW-0560">Oxidoreductase</keyword>
<keyword id="KW-0596">Phosphopantetheine</keyword>
<keyword id="KW-0597">Phosphoprotein</keyword>
<keyword id="KW-1185">Reference proteome</keyword>
<keyword id="KW-0809">Transit peptide</keyword>
<gene>
    <name evidence="7 10" type="primary">Aldh1l2</name>
</gene>
<protein>
    <recommendedName>
        <fullName evidence="9">Mitochondrial 10-formyltetrahydrofolate dehydrogenase</fullName>
        <shortName>Mitochondrial 10-FTHFDH</shortName>
        <shortName>mtFDH</shortName>
        <ecNumber evidence="6">1.5.1.6</ecNumber>
    </recommendedName>
    <alternativeName>
        <fullName evidence="7">Aldehyde dehydrogenase family 1 member L2</fullName>
    </alternativeName>
</protein>
<dbReference type="EC" id="1.5.1.6" evidence="6"/>
<dbReference type="EMBL" id="AC113014">
    <property type="status" value="NOT_ANNOTATED_CDS"/>
    <property type="molecule type" value="Genomic_DNA"/>
</dbReference>
<dbReference type="EMBL" id="BC034531">
    <property type="protein sequence ID" value="AAH34531.1"/>
    <property type="molecule type" value="mRNA"/>
</dbReference>
<dbReference type="CCDS" id="CCDS24077.1"/>
<dbReference type="RefSeq" id="NP_705771.2">
    <property type="nucleotide sequence ID" value="NM_153543.2"/>
</dbReference>
<dbReference type="SMR" id="Q8K009"/>
<dbReference type="BioGRID" id="229719">
    <property type="interactions" value="4"/>
</dbReference>
<dbReference type="FunCoup" id="Q8K009">
    <property type="interactions" value="556"/>
</dbReference>
<dbReference type="STRING" id="10090.ENSMUSP00000020497"/>
<dbReference type="iPTMnet" id="Q8K009"/>
<dbReference type="PhosphoSitePlus" id="Q8K009"/>
<dbReference type="SwissPalm" id="Q8K009"/>
<dbReference type="jPOST" id="Q8K009"/>
<dbReference type="PaxDb" id="10090-ENSMUSP00000020497"/>
<dbReference type="PeptideAtlas" id="Q8K009"/>
<dbReference type="ProteomicsDB" id="296161"/>
<dbReference type="Pumba" id="Q8K009"/>
<dbReference type="Antibodypedia" id="30615">
    <property type="antibodies" value="95 antibodies from 22 providers"/>
</dbReference>
<dbReference type="DNASU" id="216188"/>
<dbReference type="Ensembl" id="ENSMUST00000020497.14">
    <property type="protein sequence ID" value="ENSMUSP00000020497.8"/>
    <property type="gene ID" value="ENSMUSG00000020256.15"/>
</dbReference>
<dbReference type="GeneID" id="216188"/>
<dbReference type="KEGG" id="mmu:216188"/>
<dbReference type="UCSC" id="uc007gkh.2">
    <property type="organism name" value="mouse"/>
</dbReference>
<dbReference type="AGR" id="MGI:2444680"/>
<dbReference type="CTD" id="160428"/>
<dbReference type="MGI" id="MGI:2444680">
    <property type="gene designation" value="Aldh1l2"/>
</dbReference>
<dbReference type="VEuPathDB" id="HostDB:ENSMUSG00000020256"/>
<dbReference type="eggNOG" id="KOG2452">
    <property type="taxonomic scope" value="Eukaryota"/>
</dbReference>
<dbReference type="GeneTree" id="ENSGT00940000158018"/>
<dbReference type="InParanoid" id="Q8K009"/>
<dbReference type="OMA" id="NEQVFMA"/>
<dbReference type="OrthoDB" id="310895at2759"/>
<dbReference type="PhylomeDB" id="Q8K009"/>
<dbReference type="TreeFam" id="TF354242"/>
<dbReference type="Reactome" id="R-MMU-196757">
    <property type="pathway name" value="Metabolism of folate and pterines"/>
</dbReference>
<dbReference type="BioGRID-ORCS" id="216188">
    <property type="hits" value="4 hits in 77 CRISPR screens"/>
</dbReference>
<dbReference type="ChiTaRS" id="Aldh1l2">
    <property type="organism name" value="mouse"/>
</dbReference>
<dbReference type="PRO" id="PR:Q8K009"/>
<dbReference type="Proteomes" id="UP000000589">
    <property type="component" value="Chromosome 10"/>
</dbReference>
<dbReference type="RNAct" id="Q8K009">
    <property type="molecule type" value="protein"/>
</dbReference>
<dbReference type="Bgee" id="ENSMUSG00000020256">
    <property type="expression patterns" value="Expressed in parotid gland and 167 other cell types or tissues"/>
</dbReference>
<dbReference type="ExpressionAtlas" id="Q8K009">
    <property type="expression patterns" value="baseline and differential"/>
</dbReference>
<dbReference type="GO" id="GO:0005739">
    <property type="term" value="C:mitochondrion"/>
    <property type="evidence" value="ECO:0007005"/>
    <property type="project" value="MGI"/>
</dbReference>
<dbReference type="GO" id="GO:0005654">
    <property type="term" value="C:nucleoplasm"/>
    <property type="evidence" value="ECO:0007669"/>
    <property type="project" value="Ensembl"/>
</dbReference>
<dbReference type="GO" id="GO:0016155">
    <property type="term" value="F:formyltetrahydrofolate dehydrogenase activity"/>
    <property type="evidence" value="ECO:0000315"/>
    <property type="project" value="UniProtKB"/>
</dbReference>
<dbReference type="GO" id="GO:0016620">
    <property type="term" value="F:oxidoreductase activity, acting on the aldehyde or oxo group of donors, NAD or NADP as acceptor"/>
    <property type="evidence" value="ECO:0007669"/>
    <property type="project" value="InterPro"/>
</dbReference>
<dbReference type="GO" id="GO:0009258">
    <property type="term" value="P:10-formyltetrahydrofolate catabolic process"/>
    <property type="evidence" value="ECO:0000315"/>
    <property type="project" value="UniProtKB"/>
</dbReference>
<dbReference type="GO" id="GO:0009058">
    <property type="term" value="P:biosynthetic process"/>
    <property type="evidence" value="ECO:0007669"/>
    <property type="project" value="InterPro"/>
</dbReference>
<dbReference type="GO" id="GO:0006635">
    <property type="term" value="P:fatty acid beta-oxidation"/>
    <property type="evidence" value="ECO:0000315"/>
    <property type="project" value="UniProtKB"/>
</dbReference>
<dbReference type="GO" id="GO:0046655">
    <property type="term" value="P:folic acid metabolic process"/>
    <property type="evidence" value="ECO:0000315"/>
    <property type="project" value="UniProtKB"/>
</dbReference>
<dbReference type="GO" id="GO:0006740">
    <property type="term" value="P:NADPH regeneration"/>
    <property type="evidence" value="ECO:0000315"/>
    <property type="project" value="UniProtKB"/>
</dbReference>
<dbReference type="GO" id="GO:0006730">
    <property type="term" value="P:one-carbon metabolic process"/>
    <property type="evidence" value="ECO:0007669"/>
    <property type="project" value="UniProtKB-KW"/>
</dbReference>
<dbReference type="CDD" id="cd07140">
    <property type="entry name" value="ALDH_F1L_FTFDH"/>
    <property type="match status" value="1"/>
</dbReference>
<dbReference type="CDD" id="cd08703">
    <property type="entry name" value="FDH_Hydrolase_C"/>
    <property type="match status" value="1"/>
</dbReference>
<dbReference type="CDD" id="cd08647">
    <property type="entry name" value="FMT_core_FDH_N"/>
    <property type="match status" value="1"/>
</dbReference>
<dbReference type="FunFam" id="1.10.1200.10:FF:000002">
    <property type="entry name" value="10-formyltetrahydrofolate dehydrogenase"/>
    <property type="match status" value="1"/>
</dbReference>
<dbReference type="FunFam" id="3.10.25.10:FF:000002">
    <property type="entry name" value="10-formyltetrahydrofolate dehydrogenase"/>
    <property type="match status" value="1"/>
</dbReference>
<dbReference type="FunFam" id="3.40.50.170:FF:000002">
    <property type="entry name" value="10-formyltetrahydrofolate dehydrogenase"/>
    <property type="match status" value="1"/>
</dbReference>
<dbReference type="FunFam" id="3.40.605.10:FF:000026">
    <property type="entry name" value="Aldehyde dehydrogenase, putative"/>
    <property type="match status" value="1"/>
</dbReference>
<dbReference type="FunFam" id="3.40.309.10:FF:000008">
    <property type="entry name" value="Cytosolic 10-formyltetrahydrofolate dehydrogenase"/>
    <property type="match status" value="1"/>
</dbReference>
<dbReference type="FunFam" id="3.40.605.10:FF:000009">
    <property type="entry name" value="Cytosolic 10-formyltetrahydrofolate dehydrogenase"/>
    <property type="match status" value="1"/>
</dbReference>
<dbReference type="Gene3D" id="1.10.1200.10">
    <property type="entry name" value="ACP-like"/>
    <property type="match status" value="1"/>
</dbReference>
<dbReference type="Gene3D" id="3.40.605.10">
    <property type="entry name" value="Aldehyde Dehydrogenase, Chain A, domain 1"/>
    <property type="match status" value="1"/>
</dbReference>
<dbReference type="Gene3D" id="3.40.309.10">
    <property type="entry name" value="Aldehyde Dehydrogenase, Chain A, domain 2"/>
    <property type="match status" value="1"/>
</dbReference>
<dbReference type="Gene3D" id="3.10.25.10">
    <property type="entry name" value="Formyl transferase, C-terminal domain"/>
    <property type="match status" value="1"/>
</dbReference>
<dbReference type="Gene3D" id="3.40.50.170">
    <property type="entry name" value="Formyl transferase, N-terminal domain"/>
    <property type="match status" value="1"/>
</dbReference>
<dbReference type="InterPro" id="IPR011407">
    <property type="entry name" value="10_FTHF_DH"/>
</dbReference>
<dbReference type="InterPro" id="IPR036736">
    <property type="entry name" value="ACP-like_sf"/>
</dbReference>
<dbReference type="InterPro" id="IPR016161">
    <property type="entry name" value="Ald_DH/histidinol_DH"/>
</dbReference>
<dbReference type="InterPro" id="IPR016163">
    <property type="entry name" value="Ald_DH_C"/>
</dbReference>
<dbReference type="InterPro" id="IPR016160">
    <property type="entry name" value="Ald_DH_CS_CYS"/>
</dbReference>
<dbReference type="InterPro" id="IPR029510">
    <property type="entry name" value="Ald_DH_CS_GLU"/>
</dbReference>
<dbReference type="InterPro" id="IPR016162">
    <property type="entry name" value="Ald_DH_N"/>
</dbReference>
<dbReference type="InterPro" id="IPR015590">
    <property type="entry name" value="Aldehyde_DH_dom"/>
</dbReference>
<dbReference type="InterPro" id="IPR005793">
    <property type="entry name" value="Formyl_trans_C"/>
</dbReference>
<dbReference type="InterPro" id="IPR037022">
    <property type="entry name" value="Formyl_trans_C_sf"/>
</dbReference>
<dbReference type="InterPro" id="IPR002376">
    <property type="entry name" value="Formyl_transf_N"/>
</dbReference>
<dbReference type="InterPro" id="IPR036477">
    <property type="entry name" value="Formyl_transf_N_sf"/>
</dbReference>
<dbReference type="InterPro" id="IPR011034">
    <property type="entry name" value="Formyl_transferase-like_C_sf"/>
</dbReference>
<dbReference type="InterPro" id="IPR001555">
    <property type="entry name" value="GART_AS"/>
</dbReference>
<dbReference type="InterPro" id="IPR009081">
    <property type="entry name" value="PP-bd_ACP"/>
</dbReference>
<dbReference type="InterPro" id="IPR006162">
    <property type="entry name" value="Ppantetheine_attach_site"/>
</dbReference>
<dbReference type="PANTHER" id="PTHR11699">
    <property type="entry name" value="ALDEHYDE DEHYDROGENASE-RELATED"/>
    <property type="match status" value="1"/>
</dbReference>
<dbReference type="Pfam" id="PF00171">
    <property type="entry name" value="Aldedh"/>
    <property type="match status" value="1"/>
</dbReference>
<dbReference type="Pfam" id="PF02911">
    <property type="entry name" value="Formyl_trans_C"/>
    <property type="match status" value="1"/>
</dbReference>
<dbReference type="Pfam" id="PF00551">
    <property type="entry name" value="Formyl_trans_N"/>
    <property type="match status" value="1"/>
</dbReference>
<dbReference type="Pfam" id="PF00550">
    <property type="entry name" value="PP-binding"/>
    <property type="match status" value="1"/>
</dbReference>
<dbReference type="PIRSF" id="PIRSF036489">
    <property type="entry name" value="10-FTHFDH"/>
    <property type="match status" value="1"/>
</dbReference>
<dbReference type="SUPFAM" id="SSF47336">
    <property type="entry name" value="ACP-like"/>
    <property type="match status" value="1"/>
</dbReference>
<dbReference type="SUPFAM" id="SSF53720">
    <property type="entry name" value="ALDH-like"/>
    <property type="match status" value="1"/>
</dbReference>
<dbReference type="SUPFAM" id="SSF50486">
    <property type="entry name" value="FMT C-terminal domain-like"/>
    <property type="match status" value="1"/>
</dbReference>
<dbReference type="SUPFAM" id="SSF53328">
    <property type="entry name" value="Formyltransferase"/>
    <property type="match status" value="1"/>
</dbReference>
<dbReference type="PROSITE" id="PS00070">
    <property type="entry name" value="ALDEHYDE_DEHYDR_CYS"/>
    <property type="match status" value="1"/>
</dbReference>
<dbReference type="PROSITE" id="PS00687">
    <property type="entry name" value="ALDEHYDE_DEHYDR_GLU"/>
    <property type="match status" value="1"/>
</dbReference>
<dbReference type="PROSITE" id="PS50075">
    <property type="entry name" value="CARRIER"/>
    <property type="match status" value="1"/>
</dbReference>
<dbReference type="PROSITE" id="PS00373">
    <property type="entry name" value="GART"/>
    <property type="match status" value="1"/>
</dbReference>
<dbReference type="PROSITE" id="PS00012">
    <property type="entry name" value="PHOSPHOPANTETHEINE"/>
    <property type="match status" value="1"/>
</dbReference>
<proteinExistence type="evidence at protein level"/>
<accession>Q8K009</accession>
<accession>E9QLV8</accession>